<comment type="function">
    <text evidence="1">Part of a membrane-bound complex that couples electron transfer with translocation of ions across the membrane.</text>
</comment>
<comment type="cofactor">
    <cofactor evidence="1">
        <name>FMN</name>
        <dbReference type="ChEBI" id="CHEBI:58210"/>
    </cofactor>
</comment>
<comment type="subunit">
    <text evidence="1">The complex is composed of six subunits: RnfA, RnfB, RnfC, RnfD, RnfE and RnfG.</text>
</comment>
<comment type="subcellular location">
    <subcellularLocation>
        <location evidence="1">Cell inner membrane</location>
        <topology evidence="1">Multi-pass membrane protein</topology>
    </subcellularLocation>
</comment>
<comment type="similarity">
    <text evidence="1">Belongs to the NqrB/RnfD family.</text>
</comment>
<keyword id="KW-0997">Cell inner membrane</keyword>
<keyword id="KW-1003">Cell membrane</keyword>
<keyword id="KW-0249">Electron transport</keyword>
<keyword id="KW-0285">Flavoprotein</keyword>
<keyword id="KW-0288">FMN</keyword>
<keyword id="KW-0472">Membrane</keyword>
<keyword id="KW-0597">Phosphoprotein</keyword>
<keyword id="KW-1185">Reference proteome</keyword>
<keyword id="KW-1278">Translocase</keyword>
<keyword id="KW-0812">Transmembrane</keyword>
<keyword id="KW-1133">Transmembrane helix</keyword>
<keyword id="KW-0813">Transport</keyword>
<sequence>MAFRIASSPFTHNQQRTQRIMLWVILACLPGMLAQVYFFGYGNLIQVGLASATALIAEGVTLSLRKFAVRTTLADNSALLTAVLLGISLPPLAPWWMVVMATVFAIIIAKQLYGGLGQNPFNPAMIGYVVLLISFPVQMTSWLPPEPLQTISLSFHDSLVIIFTGHTPDGHTMQQLMHNVDGVSQATPLDTFKTSLRSGQTPQNILQQPMFAQSLSGIGWQWVNIGFLIGGLFLLMRGTIRWHIPVSFLLSLMFCALLSWIIAPDKFAQPMLHLLSGATMLGAFFIATDPVTASTTNRGRLIFGALIGLLVWLIRTYGGYPDGVAFAVLLANITVPLIDYYTKPRAYGHHR</sequence>
<organism>
    <name type="scientific">Pectobacterium atrosepticum (strain SCRI 1043 / ATCC BAA-672)</name>
    <name type="common">Erwinia carotovora subsp. atroseptica</name>
    <dbReference type="NCBI Taxonomy" id="218491"/>
    <lineage>
        <taxon>Bacteria</taxon>
        <taxon>Pseudomonadati</taxon>
        <taxon>Pseudomonadota</taxon>
        <taxon>Gammaproteobacteria</taxon>
        <taxon>Enterobacterales</taxon>
        <taxon>Pectobacteriaceae</taxon>
        <taxon>Pectobacterium</taxon>
    </lineage>
</organism>
<reference key="1">
    <citation type="journal article" date="2004" name="Proc. Natl. Acad. Sci. U.S.A.">
        <title>Genome sequence of the enterobacterial phytopathogen Erwinia carotovora subsp. atroseptica and characterization of virulence factors.</title>
        <authorList>
            <person name="Bell K.S."/>
            <person name="Sebaihia M."/>
            <person name="Pritchard L."/>
            <person name="Holden M.T.G."/>
            <person name="Hyman L.J."/>
            <person name="Holeva M.C."/>
            <person name="Thomson N.R."/>
            <person name="Bentley S.D."/>
            <person name="Churcher L.J.C."/>
            <person name="Mungall K."/>
            <person name="Atkin R."/>
            <person name="Bason N."/>
            <person name="Brooks K."/>
            <person name="Chillingworth T."/>
            <person name="Clark K."/>
            <person name="Doggett J."/>
            <person name="Fraser A."/>
            <person name="Hance Z."/>
            <person name="Hauser H."/>
            <person name="Jagels K."/>
            <person name="Moule S."/>
            <person name="Norbertczak H."/>
            <person name="Ormond D."/>
            <person name="Price C."/>
            <person name="Quail M.A."/>
            <person name="Sanders M."/>
            <person name="Walker D."/>
            <person name="Whitehead S."/>
            <person name="Salmond G.P.C."/>
            <person name="Birch P.R.J."/>
            <person name="Parkhill J."/>
            <person name="Toth I.K."/>
        </authorList>
    </citation>
    <scope>NUCLEOTIDE SEQUENCE [LARGE SCALE GENOMIC DNA]</scope>
    <source>
        <strain>SCRI 1043 / ATCC BAA-672</strain>
    </source>
</reference>
<protein>
    <recommendedName>
        <fullName evidence="1">Ion-translocating oxidoreductase complex subunit D</fullName>
        <ecNumber evidence="1">7.-.-.-</ecNumber>
    </recommendedName>
    <alternativeName>
        <fullName evidence="1">Rnf electron transport complex subunit D</fullName>
    </alternativeName>
</protein>
<evidence type="ECO:0000255" key="1">
    <source>
        <dbReference type="HAMAP-Rule" id="MF_00462"/>
    </source>
</evidence>
<proteinExistence type="inferred from homology"/>
<feature type="chain" id="PRO_0000298227" description="Ion-translocating oxidoreductase complex subunit D">
    <location>
        <begin position="1"/>
        <end position="351"/>
    </location>
</feature>
<feature type="transmembrane region" description="Helical" evidence="1">
    <location>
        <begin position="20"/>
        <end position="40"/>
    </location>
</feature>
<feature type="transmembrane region" description="Helical" evidence="1">
    <location>
        <begin position="44"/>
        <end position="64"/>
    </location>
</feature>
<feature type="transmembrane region" description="Helical" evidence="1">
    <location>
        <begin position="89"/>
        <end position="109"/>
    </location>
</feature>
<feature type="transmembrane region" description="Helical" evidence="1">
    <location>
        <begin position="123"/>
        <end position="143"/>
    </location>
</feature>
<feature type="transmembrane region" description="Helical" evidence="1">
    <location>
        <begin position="215"/>
        <end position="235"/>
    </location>
</feature>
<feature type="transmembrane region" description="Helical" evidence="1">
    <location>
        <begin position="244"/>
        <end position="264"/>
    </location>
</feature>
<feature type="transmembrane region" description="Helical" evidence="1">
    <location>
        <begin position="267"/>
        <end position="287"/>
    </location>
</feature>
<feature type="transmembrane region" description="Helical" evidence="1">
    <location>
        <begin position="301"/>
        <end position="321"/>
    </location>
</feature>
<feature type="transmembrane region" description="Helical" evidence="1">
    <location>
        <begin position="322"/>
        <end position="342"/>
    </location>
</feature>
<feature type="modified residue" description="FMN phosphoryl threonine" evidence="1">
    <location>
        <position position="187"/>
    </location>
</feature>
<name>RNFD_PECAS</name>
<dbReference type="EC" id="7.-.-.-" evidence="1"/>
<dbReference type="EMBL" id="BX950851">
    <property type="protein sequence ID" value="CAG75182.1"/>
    <property type="molecule type" value="Genomic_DNA"/>
</dbReference>
<dbReference type="SMR" id="Q6D4W1"/>
<dbReference type="STRING" id="218491.ECA2279"/>
<dbReference type="KEGG" id="eca:ECA2279"/>
<dbReference type="PATRIC" id="fig|218491.5.peg.2309"/>
<dbReference type="eggNOG" id="COG4658">
    <property type="taxonomic scope" value="Bacteria"/>
</dbReference>
<dbReference type="HOGENOM" id="CLU_042020_0_0_6"/>
<dbReference type="OrthoDB" id="9776359at2"/>
<dbReference type="Proteomes" id="UP000007966">
    <property type="component" value="Chromosome"/>
</dbReference>
<dbReference type="GO" id="GO:0005886">
    <property type="term" value="C:plasma membrane"/>
    <property type="evidence" value="ECO:0007669"/>
    <property type="project" value="UniProtKB-SubCell"/>
</dbReference>
<dbReference type="GO" id="GO:0022900">
    <property type="term" value="P:electron transport chain"/>
    <property type="evidence" value="ECO:0007669"/>
    <property type="project" value="UniProtKB-UniRule"/>
</dbReference>
<dbReference type="GO" id="GO:0055085">
    <property type="term" value="P:transmembrane transport"/>
    <property type="evidence" value="ECO:0007669"/>
    <property type="project" value="InterPro"/>
</dbReference>
<dbReference type="HAMAP" id="MF_00462">
    <property type="entry name" value="RsxD_RnfD"/>
    <property type="match status" value="1"/>
</dbReference>
<dbReference type="InterPro" id="IPR004338">
    <property type="entry name" value="NqrB/RnfD"/>
</dbReference>
<dbReference type="InterPro" id="IPR011303">
    <property type="entry name" value="RnfD_bac"/>
</dbReference>
<dbReference type="NCBIfam" id="NF002011">
    <property type="entry name" value="PRK00816.1"/>
    <property type="match status" value="1"/>
</dbReference>
<dbReference type="NCBIfam" id="TIGR01946">
    <property type="entry name" value="rnfD"/>
    <property type="match status" value="1"/>
</dbReference>
<dbReference type="PANTHER" id="PTHR30578">
    <property type="entry name" value="ELECTRON TRANSPORT COMPLEX PROTEIN RNFD"/>
    <property type="match status" value="1"/>
</dbReference>
<dbReference type="PANTHER" id="PTHR30578:SF0">
    <property type="entry name" value="ION-TRANSLOCATING OXIDOREDUCTASE COMPLEX SUBUNIT D"/>
    <property type="match status" value="1"/>
</dbReference>
<dbReference type="Pfam" id="PF03116">
    <property type="entry name" value="NQR2_RnfD_RnfE"/>
    <property type="match status" value="1"/>
</dbReference>
<accession>Q6D4W1</accession>
<gene>
    <name evidence="1" type="primary">rnfD</name>
    <name type="ordered locus">ECA2279</name>
</gene>